<sequence length="1034" mass="121283">MINSHHTSQQTLNKESKSQMDKSYNIDDSIVDAKFENYTKKYQDDKLNKILHTYIKNPQILMDEEKEIKERFLAKQMKDVAATKQKFDTKNKLQQLELENENSQNNSYKTSNNLSKEEVIAVLQKQNRKSQVNSVLADNSNIQNDFYPQYRKPKNPTTKKRQSTDYTKRNTFQLENLNIQQQLNNKDSLNQQNQQQQDLAKNRVDNSQNQDIQARLYERTELQKLRIKQKEEEQAALKNKRQTNRSQSIEQNVNFVQNDNQKLIDRHKEYLKQLKQQVTIEKETQKQLKKKDEENKIRLRNSVLASIKNDLTEQRKLIQENHNLFLSKSTVSQSAKQISLPEINQSLTICLEKQKSEVEQEKKAVLTSQAFFRQSSLREIEETNEKIESKTNLSKVKKLRPLPFISSMVEWKKKQRIPADSKIFIVMGGYKDFKKALLKRGWIENPQTNSPCFDLKWTLLGKDIDYDNILPNQIVNHFENNSKICSKIGLLNSLKNLYWFDNADLNCFFPQCFDMNDPDEFNDFVKNFKLSKAVSVLKKYLRLYLEKDEKYNNCKIQAQVALQVLTRYYNDINNVIDDEKQASEYFKSIPDDEWEILASDEMSNEDLAKKKHFEWIKKIKLAYQGIKVKAQVKKKKKKSLAMIKKMISNEAIKRKQDGEKQQIDSSDSEDEEVEMDDFTSAVNQFLNQREKCDPQFNLKGEDNIWIVKPAGLSRGRGITCYKNLVEIIDHAKSMELQMIVQKYIENPVLIKQRKFDIRIWVLVTDWNPLAIWYFDECYVRFSADSYSTKNLSNKFQHLTNNAISKKKAQQGQDEITLQGNMYTQEQLENFFIETEGYNVFQQKIKPQIINIIKWSILSCSDTVESRKNSMELFGYDIMIDTNFNPWLLEVNTSPSLEYSTEITKKLVKQVLEDVAKVVVDYGMAQKSGIKKSELQKIGTGKFIKIYQGLEIQDKGINSIQKNFICEGSKMKIRKPKKQKKNTKLDKKQNLQQDLTINNQINHDQKQFSSQQANNIETYSRPQTAKSQTQSSKKL</sequence>
<proteinExistence type="inferred from homology"/>
<evidence type="ECO:0000250" key="1"/>
<evidence type="ECO:0000250" key="2">
    <source>
        <dbReference type="UniProtKB" id="Q6ZT98"/>
    </source>
</evidence>
<evidence type="ECO:0000255" key="3">
    <source>
        <dbReference type="PROSITE-ProRule" id="PRU00568"/>
    </source>
</evidence>
<evidence type="ECO:0000256" key="4">
    <source>
        <dbReference type="SAM" id="MobiDB-lite"/>
    </source>
</evidence>
<evidence type="ECO:0000269" key="5">
    <source>
    </source>
</evidence>
<protein>
    <recommendedName>
        <fullName>Tubulin glycylase 3D</fullName>
        <ecNumber>6.3.2.-</ecNumber>
    </recommendedName>
</protein>
<gene>
    <name type="primary">TTLL3D</name>
    <name type="ORF">TTHERM_00196050</name>
</gene>
<organism>
    <name type="scientific">Tetrahymena thermophila (strain SB210)</name>
    <dbReference type="NCBI Taxonomy" id="312017"/>
    <lineage>
        <taxon>Eukaryota</taxon>
        <taxon>Sar</taxon>
        <taxon>Alveolata</taxon>
        <taxon>Ciliophora</taxon>
        <taxon>Intramacronucleata</taxon>
        <taxon>Oligohymenophorea</taxon>
        <taxon>Hymenostomatida</taxon>
        <taxon>Tetrahymenina</taxon>
        <taxon>Tetrahymenidae</taxon>
        <taxon>Tetrahymena</taxon>
    </lineage>
</organism>
<reference key="1">
    <citation type="journal article" date="2006" name="PLoS Biol.">
        <title>Macronuclear genome sequence of the ciliate Tetrahymena thermophila, a model eukaryote.</title>
        <authorList>
            <person name="Eisen J.A."/>
            <person name="Coyne R.S."/>
            <person name="Wu M."/>
            <person name="Wu D."/>
            <person name="Thiagarajan M."/>
            <person name="Wortman J.R."/>
            <person name="Badger J.H."/>
            <person name="Ren Q."/>
            <person name="Amedeo P."/>
            <person name="Jones K.M."/>
            <person name="Tallon L.J."/>
            <person name="Delcher A.L."/>
            <person name="Salzberg S.L."/>
            <person name="Silva J.C."/>
            <person name="Haas B.J."/>
            <person name="Majoros W.H."/>
            <person name="Farzad M."/>
            <person name="Carlton J.M."/>
            <person name="Smith R.K. Jr."/>
            <person name="Garg J."/>
            <person name="Pearlman R.E."/>
            <person name="Karrer K.M."/>
            <person name="Sun L."/>
            <person name="Manning G."/>
            <person name="Elde N.C."/>
            <person name="Turkewitz A.P."/>
            <person name="Asai D.J."/>
            <person name="Wilkes D.E."/>
            <person name="Wang Y."/>
            <person name="Cai H."/>
            <person name="Collins K."/>
            <person name="Stewart B.A."/>
            <person name="Lee S.R."/>
            <person name="Wilamowska K."/>
            <person name="Weinberg Z."/>
            <person name="Ruzzo W.L."/>
            <person name="Wloga D."/>
            <person name="Gaertig J."/>
            <person name="Frankel J."/>
            <person name="Tsao C.-C."/>
            <person name="Gorovsky M.A."/>
            <person name="Keeling P.J."/>
            <person name="Waller R.F."/>
            <person name="Patron N.J."/>
            <person name="Cherry J.M."/>
            <person name="Stover N.A."/>
            <person name="Krieger C.J."/>
            <person name="del Toro C."/>
            <person name="Ryder H.F."/>
            <person name="Williamson S.C."/>
            <person name="Barbeau R.A."/>
            <person name="Hamilton E.P."/>
            <person name="Orias E."/>
        </authorList>
    </citation>
    <scope>NUCLEOTIDE SEQUENCE [LARGE SCALE GENOMIC DNA]</scope>
    <source>
        <strain>SB210</strain>
    </source>
</reference>
<reference key="2">
    <citation type="journal article" date="2009" name="Dev. Cell">
        <title>TTLL3 Is a tubulin glycine ligase that regulates the assembly of cilia.</title>
        <authorList>
            <person name="Wloga D."/>
            <person name="Webster D.M."/>
            <person name="Rogowski K."/>
            <person name="Bre M.-H."/>
            <person name="Levilliers N."/>
            <person name="Jerka-Dziadosz M."/>
            <person name="Janke C."/>
            <person name="Dougan S.T."/>
            <person name="Gaertig J."/>
        </authorList>
    </citation>
    <scope>SUBCELLULAR LOCATION</scope>
    <scope>DISRUPTION PHENOTYPE</scope>
</reference>
<accession>Q23K29</accession>
<feature type="chain" id="PRO_0000381800" description="Tubulin glycylase 3D">
    <location>
        <begin position="1"/>
        <end position="1034"/>
    </location>
</feature>
<feature type="domain" description="TTL" evidence="3">
    <location>
        <begin position="571"/>
        <end position="930"/>
    </location>
</feature>
<feature type="region of interest" description="Disordered" evidence="4">
    <location>
        <begin position="1"/>
        <end position="21"/>
    </location>
</feature>
<feature type="region of interest" description="Disordered" evidence="4">
    <location>
        <begin position="131"/>
        <end position="166"/>
    </location>
</feature>
<feature type="region of interest" description="Disordered" evidence="4">
    <location>
        <begin position="189"/>
        <end position="208"/>
    </location>
</feature>
<feature type="region of interest" description="Disordered" evidence="4">
    <location>
        <begin position="1002"/>
        <end position="1034"/>
    </location>
</feature>
<feature type="compositionally biased region" description="Polar residues" evidence="4">
    <location>
        <begin position="1"/>
        <end position="13"/>
    </location>
</feature>
<feature type="compositionally biased region" description="Polar residues" evidence="4">
    <location>
        <begin position="131"/>
        <end position="146"/>
    </location>
</feature>
<feature type="compositionally biased region" description="Basic residues" evidence="4">
    <location>
        <begin position="151"/>
        <end position="161"/>
    </location>
</feature>
<feature type="compositionally biased region" description="Low complexity" evidence="4">
    <location>
        <begin position="189"/>
        <end position="199"/>
    </location>
</feature>
<feature type="binding site" evidence="2">
    <location>
        <begin position="741"/>
        <end position="744"/>
    </location>
    <ligand>
        <name>ATP</name>
        <dbReference type="ChEBI" id="CHEBI:30616"/>
    </ligand>
</feature>
<feature type="binding site" evidence="2">
    <location>
        <position position="754"/>
    </location>
    <ligand>
        <name>ATP</name>
        <dbReference type="ChEBI" id="CHEBI:30616"/>
    </ligand>
</feature>
<feature type="binding site" evidence="2">
    <location>
        <position position="756"/>
    </location>
    <ligand>
        <name>ATP</name>
        <dbReference type="ChEBI" id="CHEBI:30616"/>
    </ligand>
</feature>
<dbReference type="EC" id="6.3.2.-"/>
<dbReference type="EMBL" id="GG662673">
    <property type="protein sequence ID" value="EAR97014.2"/>
    <property type="molecule type" value="Genomic_DNA"/>
</dbReference>
<dbReference type="RefSeq" id="XP_001017259.2">
    <property type="nucleotide sequence ID" value="XM_001017259.2"/>
</dbReference>
<dbReference type="SMR" id="Q23K29"/>
<dbReference type="STRING" id="312017.Q23K29"/>
<dbReference type="EnsemblProtists" id="EAR97014">
    <property type="protein sequence ID" value="EAR97014"/>
    <property type="gene ID" value="TTHERM_00196050"/>
</dbReference>
<dbReference type="GeneID" id="7825803"/>
<dbReference type="KEGG" id="tet:TTHERM_00196050"/>
<dbReference type="eggNOG" id="KOG2157">
    <property type="taxonomic scope" value="Eukaryota"/>
</dbReference>
<dbReference type="HOGENOM" id="CLU_297097_0_0_1"/>
<dbReference type="InParanoid" id="Q23K29"/>
<dbReference type="OrthoDB" id="10255472at2759"/>
<dbReference type="Proteomes" id="UP000009168">
    <property type="component" value="Unassembled WGS sequence"/>
</dbReference>
<dbReference type="GO" id="GO:0005737">
    <property type="term" value="C:cytoplasm"/>
    <property type="evidence" value="ECO:0007669"/>
    <property type="project" value="UniProtKB-SubCell"/>
</dbReference>
<dbReference type="GO" id="GO:0015630">
    <property type="term" value="C:microtubule cytoskeleton"/>
    <property type="evidence" value="ECO:0007669"/>
    <property type="project" value="TreeGrafter"/>
</dbReference>
<dbReference type="GO" id="GO:0005524">
    <property type="term" value="F:ATP binding"/>
    <property type="evidence" value="ECO:0007669"/>
    <property type="project" value="UniProtKB-KW"/>
</dbReference>
<dbReference type="GO" id="GO:0070735">
    <property type="term" value="F:protein-glycine ligase activity"/>
    <property type="evidence" value="ECO:0000304"/>
    <property type="project" value="UniProtKB"/>
</dbReference>
<dbReference type="GO" id="GO:0070736">
    <property type="term" value="F:protein-glycine ligase activity, initiating"/>
    <property type="evidence" value="ECO:0007669"/>
    <property type="project" value="TreeGrafter"/>
</dbReference>
<dbReference type="GO" id="GO:0018094">
    <property type="term" value="P:protein polyglycylation"/>
    <property type="evidence" value="ECO:0000304"/>
    <property type="project" value="UniProtKB"/>
</dbReference>
<dbReference type="Gene3D" id="3.30.470.20">
    <property type="entry name" value="ATP-grasp fold, B domain"/>
    <property type="match status" value="1"/>
</dbReference>
<dbReference type="InterPro" id="IPR004344">
    <property type="entry name" value="TTL/TTLL_fam"/>
</dbReference>
<dbReference type="InterPro" id="IPR051437">
    <property type="entry name" value="TTLL_monoglycylase"/>
</dbReference>
<dbReference type="PANTHER" id="PTHR45870">
    <property type="entry name" value="TUBULIN MONOGLYCYLASE TTLL3"/>
    <property type="match status" value="1"/>
</dbReference>
<dbReference type="PANTHER" id="PTHR45870:SF2">
    <property type="entry name" value="TUBULIN MONOGLYCYLASE TTLL3"/>
    <property type="match status" value="1"/>
</dbReference>
<dbReference type="Pfam" id="PF03133">
    <property type="entry name" value="TTL"/>
    <property type="match status" value="1"/>
</dbReference>
<dbReference type="SUPFAM" id="SSF56059">
    <property type="entry name" value="Glutathione synthetase ATP-binding domain-like"/>
    <property type="match status" value="1"/>
</dbReference>
<dbReference type="PROSITE" id="PS51221">
    <property type="entry name" value="TTL"/>
    <property type="match status" value="1"/>
</dbReference>
<keyword id="KW-0067">ATP-binding</keyword>
<keyword id="KW-0963">Cytoplasm</keyword>
<keyword id="KW-0436">Ligase</keyword>
<keyword id="KW-0547">Nucleotide-binding</keyword>
<keyword id="KW-1185">Reference proteome</keyword>
<comment type="function">
    <text evidence="1">Probable glycylase which modifies tubulin, generating side chains of glycine on the gamma-carboxyl groups of specific glutamate residues within the C-terminal tail of tubulin.</text>
</comment>
<comment type="subcellular location">
    <subcellularLocation>
        <location evidence="5">Cytoplasm</location>
    </subcellularLocation>
    <text>Present in the cell body and not in cilia.</text>
</comment>
<comment type="disruption phenotype">
    <text evidence="5">Cells lacking TTLL3A, TTLL3B, TTLL3C, TTLL3D, TTLL3E and TTLL3F display shortened axonemes that are resistant to paclitaxel, indicating that tubulin glycylation changes the lattice properties of axonemal microtubules. Axonemes are however normal at the ultrastructural level.</text>
</comment>
<name>TTL3D_TETTS</name>